<proteinExistence type="evidence at protein level"/>
<name>IDH_THET8</name>
<evidence type="ECO:0000250" key="1">
    <source>
        <dbReference type="UniProtKB" id="P08200"/>
    </source>
</evidence>
<evidence type="ECO:0000269" key="2">
    <source>
    </source>
</evidence>
<evidence type="ECO:0000269" key="3">
    <source ref="3"/>
</evidence>
<evidence type="ECO:0000303" key="4">
    <source>
    </source>
</evidence>
<evidence type="ECO:0000305" key="5"/>
<evidence type="ECO:0007744" key="6">
    <source>
        <dbReference type="PDB" id="2D1C"/>
    </source>
</evidence>
<evidence type="ECO:0007829" key="7">
    <source>
        <dbReference type="PDB" id="2D1C"/>
    </source>
</evidence>
<feature type="initiator methionine" description="Removed" evidence="2">
    <location>
        <position position="1"/>
    </location>
</feature>
<feature type="chain" id="PRO_0000083571" description="Isocitrate dehydrogenase [NADP]">
    <location>
        <begin position="2"/>
        <end position="496"/>
    </location>
</feature>
<feature type="binding site" evidence="3 6">
    <location>
        <position position="88"/>
    </location>
    <ligand>
        <name>NADP(+)</name>
        <dbReference type="ChEBI" id="CHEBI:58349"/>
    </ligand>
</feature>
<feature type="binding site" evidence="3 6">
    <location>
        <position position="90"/>
    </location>
    <ligand>
        <name>NADP(+)</name>
        <dbReference type="ChEBI" id="CHEBI:58349"/>
    </ligand>
</feature>
<feature type="binding site" evidence="1">
    <location>
        <position position="98"/>
    </location>
    <ligand>
        <name>D-threo-isocitrate</name>
        <dbReference type="ChEBI" id="CHEBI:15562"/>
    </ligand>
</feature>
<feature type="binding site" evidence="1">
    <location>
        <position position="100"/>
    </location>
    <ligand>
        <name>D-threo-isocitrate</name>
        <dbReference type="ChEBI" id="CHEBI:15562"/>
    </ligand>
</feature>
<feature type="binding site" evidence="1">
    <location>
        <position position="104"/>
    </location>
    <ligand>
        <name>D-threo-isocitrate</name>
        <dbReference type="ChEBI" id="CHEBI:15562"/>
    </ligand>
</feature>
<feature type="binding site" evidence="1">
    <location>
        <position position="114"/>
    </location>
    <ligand>
        <name>D-threo-isocitrate</name>
        <dbReference type="ChEBI" id="CHEBI:15562"/>
    </ligand>
</feature>
<feature type="binding site" evidence="1">
    <location>
        <position position="137"/>
    </location>
    <ligand>
        <name>D-threo-isocitrate</name>
        <dbReference type="ChEBI" id="CHEBI:15562"/>
    </ligand>
</feature>
<feature type="binding site" evidence="3 6">
    <location>
        <position position="193"/>
    </location>
    <ligand>
        <name>NADP(+)</name>
        <dbReference type="ChEBI" id="CHEBI:58349"/>
    </ligand>
</feature>
<feature type="binding site" evidence="3 6">
    <location>
        <position position="229"/>
    </location>
    <ligand>
        <name>NADP(+)</name>
        <dbReference type="ChEBI" id="CHEBI:58349"/>
    </ligand>
</feature>
<feature type="binding site" evidence="3 6">
    <location>
        <position position="232"/>
    </location>
    <ligand>
        <name>NADP(+)</name>
        <dbReference type="ChEBI" id="CHEBI:58349"/>
    </ligand>
</feature>
<feature type="binding site" evidence="1">
    <location>
        <position position="248"/>
    </location>
    <ligand>
        <name>Mg(2+)</name>
        <dbReference type="ChEBI" id="CHEBI:18420"/>
    </ligand>
</feature>
<feature type="binding site" evidence="3 6">
    <location>
        <position position="277"/>
    </location>
    <ligand>
        <name>NADP(+)</name>
        <dbReference type="ChEBI" id="CHEBI:58349"/>
    </ligand>
</feature>
<feature type="binding site" evidence="3 6">
    <location>
        <position position="281"/>
    </location>
    <ligand>
        <name>NADP(+)</name>
        <dbReference type="ChEBI" id="CHEBI:58349"/>
    </ligand>
</feature>
<feature type="binding site" evidence="3 6">
    <location>
        <position position="282"/>
    </location>
    <ligand>
        <name>NADP(+)</name>
        <dbReference type="ChEBI" id="CHEBI:58349"/>
    </ligand>
</feature>
<feature type="binding site" evidence="3 6">
    <location>
        <position position="283"/>
    </location>
    <ligand>
        <name>NADP(+)</name>
        <dbReference type="ChEBI" id="CHEBI:58349"/>
    </ligand>
</feature>
<feature type="binding site" evidence="3 6">
    <location>
        <position position="285"/>
    </location>
    <ligand>
        <name>NADP(+)</name>
        <dbReference type="ChEBI" id="CHEBI:58349"/>
    </ligand>
</feature>
<feature type="binding site" evidence="3 6">
    <location>
        <position position="286"/>
    </location>
    <ligand>
        <name>NADP(+)</name>
        <dbReference type="ChEBI" id="CHEBI:58349"/>
    </ligand>
</feature>
<feature type="binding site" evidence="3 6">
    <location>
        <position position="293"/>
    </location>
    <ligand>
        <name>NADP(+)</name>
        <dbReference type="ChEBI" id="CHEBI:58349"/>
    </ligand>
</feature>
<feature type="site" description="Critical for catalysis" evidence="1">
    <location>
        <position position="144"/>
    </location>
</feature>
<feature type="site" description="Critical for catalysis" evidence="1">
    <location>
        <position position="191"/>
    </location>
</feature>
<feature type="sequence conflict" description="In Ref. 1; AAA27492." evidence="5" ref="1">
    <original>TL</original>
    <variation>P</variation>
    <location>
        <begin position="201"/>
        <end position="202"/>
    </location>
</feature>
<feature type="strand" evidence="7">
    <location>
        <begin position="3"/>
        <end position="5"/>
    </location>
</feature>
<feature type="strand" evidence="7">
    <location>
        <begin position="11"/>
        <end position="14"/>
    </location>
</feature>
<feature type="strand" evidence="7">
    <location>
        <begin position="20"/>
        <end position="25"/>
    </location>
</feature>
<feature type="helix" evidence="7">
    <location>
        <begin position="31"/>
        <end position="44"/>
    </location>
</feature>
<feature type="strand" evidence="7">
    <location>
        <begin position="49"/>
        <end position="53"/>
    </location>
</feature>
<feature type="helix" evidence="7">
    <location>
        <begin position="58"/>
        <end position="61"/>
    </location>
</feature>
<feature type="turn" evidence="7">
    <location>
        <begin position="62"/>
        <end position="64"/>
    </location>
</feature>
<feature type="helix" evidence="7">
    <location>
        <begin position="71"/>
        <end position="80"/>
    </location>
</feature>
<feature type="strand" evidence="7">
    <location>
        <begin position="82"/>
        <end position="85"/>
    </location>
</feature>
<feature type="strand" evidence="7">
    <location>
        <begin position="92"/>
        <end position="96"/>
    </location>
</feature>
<feature type="helix" evidence="7">
    <location>
        <begin position="99"/>
        <end position="106"/>
    </location>
</feature>
<feature type="strand" evidence="7">
    <location>
        <begin position="111"/>
        <end position="117"/>
    </location>
</feature>
<feature type="turn" evidence="7">
    <location>
        <begin position="125"/>
        <end position="128"/>
    </location>
</feature>
<feature type="strand" evidence="7">
    <location>
        <begin position="132"/>
        <end position="138"/>
    </location>
</feature>
<feature type="strand" evidence="7">
    <location>
        <begin position="140"/>
        <end position="142"/>
    </location>
</feature>
<feature type="helix" evidence="7">
    <location>
        <begin position="143"/>
        <end position="145"/>
    </location>
</feature>
<feature type="strand" evidence="7">
    <location>
        <begin position="148"/>
        <end position="152"/>
    </location>
</feature>
<feature type="strand" evidence="7">
    <location>
        <begin position="155"/>
        <end position="163"/>
    </location>
</feature>
<feature type="helix" evidence="7">
    <location>
        <begin position="164"/>
        <end position="180"/>
    </location>
</feature>
<feature type="strand" evidence="7">
    <location>
        <begin position="185"/>
        <end position="190"/>
    </location>
</feature>
<feature type="turn" evidence="7">
    <location>
        <begin position="192"/>
        <end position="194"/>
    </location>
</feature>
<feature type="helix" evidence="7">
    <location>
        <begin position="198"/>
        <end position="210"/>
    </location>
</feature>
<feature type="strand" evidence="7">
    <location>
        <begin position="216"/>
        <end position="222"/>
    </location>
</feature>
<feature type="helix" evidence="7">
    <location>
        <begin position="223"/>
        <end position="232"/>
    </location>
</feature>
<feature type="helix" evidence="7">
    <location>
        <begin position="234"/>
        <end position="236"/>
    </location>
</feature>
<feature type="strand" evidence="7">
    <location>
        <begin position="238"/>
        <end position="242"/>
    </location>
</feature>
<feature type="helix" evidence="7">
    <location>
        <begin position="244"/>
        <end position="255"/>
    </location>
</feature>
<feature type="turn" evidence="7">
    <location>
        <begin position="256"/>
        <end position="259"/>
    </location>
</feature>
<feature type="helix" evidence="7">
    <location>
        <begin position="261"/>
        <end position="263"/>
    </location>
</feature>
<feature type="strand" evidence="7">
    <location>
        <begin position="265"/>
        <end position="269"/>
    </location>
</feature>
<feature type="strand" evidence="7">
    <location>
        <begin position="274"/>
        <end position="280"/>
    </location>
</feature>
<feature type="turn" evidence="7">
    <location>
        <begin position="284"/>
        <end position="288"/>
    </location>
</feature>
<feature type="helix" evidence="7">
    <location>
        <begin position="295"/>
        <end position="307"/>
    </location>
</feature>
<feature type="helix" evidence="7">
    <location>
        <begin position="311"/>
        <end position="327"/>
    </location>
</feature>
<feature type="helix" evidence="7">
    <location>
        <begin position="333"/>
        <end position="336"/>
    </location>
</feature>
<feature type="turn" evidence="7">
    <location>
        <begin position="338"/>
        <end position="340"/>
    </location>
</feature>
<feature type="helix" evidence="7">
    <location>
        <begin position="344"/>
        <end position="353"/>
    </location>
</feature>
<feature type="turn" evidence="7">
    <location>
        <begin position="354"/>
        <end position="356"/>
    </location>
</feature>
<feature type="strand" evidence="7">
    <location>
        <begin position="360"/>
        <end position="362"/>
    </location>
</feature>
<feature type="helix" evidence="7">
    <location>
        <begin position="375"/>
        <end position="377"/>
    </location>
</feature>
<feature type="strand" evidence="7">
    <location>
        <begin position="387"/>
        <end position="397"/>
    </location>
</feature>
<feature type="helix" evidence="7">
    <location>
        <begin position="402"/>
        <end position="413"/>
    </location>
</feature>
<feature type="strand" evidence="7">
    <location>
        <begin position="416"/>
        <end position="425"/>
    </location>
</feature>
<feature type="strand" evidence="7">
    <location>
        <begin position="428"/>
        <end position="432"/>
    </location>
</feature>
<feature type="strand" evidence="7">
    <location>
        <begin position="442"/>
        <end position="450"/>
    </location>
</feature>
<feature type="strand" evidence="7">
    <location>
        <begin position="452"/>
        <end position="454"/>
    </location>
</feature>
<feature type="helix" evidence="7">
    <location>
        <begin position="458"/>
        <end position="469"/>
    </location>
</feature>
<feature type="strand" evidence="7">
    <location>
        <begin position="472"/>
        <end position="483"/>
    </location>
</feature>
<feature type="strand" evidence="7">
    <location>
        <begin position="486"/>
        <end position="489"/>
    </location>
</feature>
<organism>
    <name type="scientific">Thermus thermophilus (strain ATCC 27634 / DSM 579 / HB8)</name>
    <dbReference type="NCBI Taxonomy" id="300852"/>
    <lineage>
        <taxon>Bacteria</taxon>
        <taxon>Thermotogati</taxon>
        <taxon>Deinococcota</taxon>
        <taxon>Deinococci</taxon>
        <taxon>Thermales</taxon>
        <taxon>Thermaceae</taxon>
        <taxon>Thermus</taxon>
    </lineage>
</organism>
<sequence length="496" mass="54439">MPLITTETGKKMHVLEDGRKLITVIPGDGIGPECVEATLKVLEAAKAPLAYEVREAGASVFRRGIASGVPQETIESIRKTRVVLKGPLETPVGYGEKSANVTLRKLFETYANVRPVREFPNVPTPYAGRGIDLVVVRENVEDLYAGIEHMQTPSVAQTLKLISWKGSEKIVRFAFELARAEGRKKVHCATKSNIMKLAEGTLKRAFEQVAQEYPDIEAVHIIVDNAAHQLVKRPEQFEVIVTTNMNGDILSDLTSGLIGGLGFAPSANIGNEVAIFEAVHGSAPKYAGKNVINPTAVLLSAVMMLRYLEEFATADLIENALLYTLEEGRVLTGDVVGYDRGAKTTEYTEAIIQNLGKTPRKTQVRGYKPFRLPQVDGAIAPIVPRSRRVVGVDVFVETNLLPEALGKALEDLAAGTPFRLKMISNRGTQVYPPTGGLTDLVDHYRCRFLYTGEGEAKDPEILDLVSRVASRFRWMHLEKLQEFDGEPGFTKAQGED</sequence>
<reference key="1">
    <citation type="journal article" date="1992" name="Appl. Environ. Microbiol.">
        <title>Molecular cloning of the isocitrate dehydrogenase gene of an extreme thermophile, Thermus thermophilus HB8.</title>
        <authorList>
            <person name="Miyazaki K."/>
            <person name="Eguchi H."/>
            <person name="Yamagishi A."/>
            <person name="Wakagi T."/>
            <person name="Oshima T."/>
        </authorList>
    </citation>
    <scope>NUCLEOTIDE SEQUENCE [GENOMIC DNA]</scope>
    <scope>PROTEIN SEQUENCE OF 2-6</scope>
    <source>
        <strain>ATCC 27634 / DSM 579 / HB8</strain>
    </source>
</reference>
<reference key="2">
    <citation type="submission" date="2004-11" db="EMBL/GenBank/DDBJ databases">
        <title>Complete genome sequence of Thermus thermophilus HB8.</title>
        <authorList>
            <person name="Masui R."/>
            <person name="Kurokawa K."/>
            <person name="Nakagawa N."/>
            <person name="Tokunaga F."/>
            <person name="Koyama Y."/>
            <person name="Shibata T."/>
            <person name="Oshima T."/>
            <person name="Yokoyama S."/>
            <person name="Yasunaga T."/>
            <person name="Kuramitsu S."/>
        </authorList>
    </citation>
    <scope>NUCLEOTIDE SEQUENCE [LARGE SCALE GENOMIC DNA]</scope>
    <source>
        <strain>ATCC 27634 / DSM 579 / HB8</strain>
    </source>
</reference>
<reference key="3">
    <citation type="submission" date="2005-08" db="PDB data bank">
        <title>Crystal Structure Of TT0538 protein from Thermus thermophilus HB8.</title>
        <authorList>
            <person name="Lokanath N.K."/>
            <person name="Kunishima N."/>
        </authorList>
    </citation>
    <scope>X-RAY CRYSTALLOGRAPHY (1.80 ANGSTROMS) IN COMPLEX WITH NADP(+) AND CITRATE</scope>
    <source>
        <strain>ATCC 27634 / DSM 579 / HB8</strain>
    </source>
</reference>
<comment type="function">
    <text evidence="1">Catalyzes the oxidative decarboxylation of isocitrate to 2-oxoglutarate and carbon dioxide with the concomitant reduction of NADP(+).</text>
</comment>
<comment type="catalytic activity">
    <reaction evidence="1">
        <text>D-threo-isocitrate + NADP(+) = 2-oxoglutarate + CO2 + NADPH</text>
        <dbReference type="Rhea" id="RHEA:19629"/>
        <dbReference type="ChEBI" id="CHEBI:15562"/>
        <dbReference type="ChEBI" id="CHEBI:16526"/>
        <dbReference type="ChEBI" id="CHEBI:16810"/>
        <dbReference type="ChEBI" id="CHEBI:57783"/>
        <dbReference type="ChEBI" id="CHEBI:58349"/>
        <dbReference type="EC" id="1.1.1.42"/>
    </reaction>
</comment>
<comment type="cofactor">
    <cofactor evidence="1">
        <name>Mg(2+)</name>
        <dbReference type="ChEBI" id="CHEBI:18420"/>
    </cofactor>
    <cofactor evidence="1">
        <name>Mn(2+)</name>
        <dbReference type="ChEBI" id="CHEBI:29035"/>
    </cofactor>
    <text evidence="1">Binds 1 Mg(2+) or Mn(2+) ion per subunit.</text>
</comment>
<comment type="subunit">
    <text evidence="1">Homodimer.</text>
</comment>
<comment type="similarity">
    <text evidence="5">Belongs to the isocitrate and isopropylmalate dehydrogenases family.</text>
</comment>
<gene>
    <name type="primary">icd</name>
    <name type="ordered locus">TTHA1535</name>
</gene>
<accession>P33197</accession>
<accession>Q5SI45</accession>
<keyword id="KW-0002">3D-structure</keyword>
<keyword id="KW-0903">Direct protein sequencing</keyword>
<keyword id="KW-0329">Glyoxylate bypass</keyword>
<keyword id="KW-0460">Magnesium</keyword>
<keyword id="KW-0464">Manganese</keyword>
<keyword id="KW-0479">Metal-binding</keyword>
<keyword id="KW-0521">NADP</keyword>
<keyword id="KW-0560">Oxidoreductase</keyword>
<keyword id="KW-1185">Reference proteome</keyword>
<keyword id="KW-0816">Tricarboxylic acid cycle</keyword>
<protein>
    <recommendedName>
        <fullName evidence="4">Isocitrate dehydrogenase [NADP]</fullName>
        <shortName evidence="4">ICDH</shortName>
        <shortName>IDH</shortName>
        <ecNumber evidence="1">1.1.1.42</ecNumber>
    </recommendedName>
    <alternativeName>
        <fullName>IDP</fullName>
    </alternativeName>
    <alternativeName>
        <fullName>NADP(+)-specific ICDH</fullName>
    </alternativeName>
    <alternativeName>
        <fullName>Oxalosuccinate decarboxylase</fullName>
    </alternativeName>
</protein>
<dbReference type="EC" id="1.1.1.42" evidence="1"/>
<dbReference type="EMBL" id="M94317">
    <property type="protein sequence ID" value="AAA27492.1"/>
    <property type="molecule type" value="Genomic_DNA"/>
</dbReference>
<dbReference type="EMBL" id="AP008226">
    <property type="protein sequence ID" value="BAD71358.1"/>
    <property type="molecule type" value="Genomic_DNA"/>
</dbReference>
<dbReference type="RefSeq" id="WP_011228743.1">
    <property type="nucleotide sequence ID" value="NC_006461.1"/>
</dbReference>
<dbReference type="RefSeq" id="YP_144801.1">
    <property type="nucleotide sequence ID" value="NC_006461.1"/>
</dbReference>
<dbReference type="PDB" id="2D1C">
    <property type="method" value="X-ray"/>
    <property type="resolution" value="1.80 A"/>
    <property type="chains" value="A/B=1-496"/>
</dbReference>
<dbReference type="PDBsum" id="2D1C"/>
<dbReference type="SMR" id="P33197"/>
<dbReference type="EnsemblBacteria" id="BAD71358">
    <property type="protein sequence ID" value="BAD71358"/>
    <property type="gene ID" value="BAD71358"/>
</dbReference>
<dbReference type="GeneID" id="3168917"/>
<dbReference type="KEGG" id="ttj:TTHA1535"/>
<dbReference type="PATRIC" id="fig|300852.9.peg.1509"/>
<dbReference type="eggNOG" id="COG0473">
    <property type="taxonomic scope" value="Bacteria"/>
</dbReference>
<dbReference type="HOGENOM" id="CLU_031953_1_3_0"/>
<dbReference type="PhylomeDB" id="P33197"/>
<dbReference type="BRENDA" id="1.1.1.42">
    <property type="organism ID" value="2305"/>
</dbReference>
<dbReference type="EvolutionaryTrace" id="P33197"/>
<dbReference type="Proteomes" id="UP000000532">
    <property type="component" value="Chromosome"/>
</dbReference>
<dbReference type="GO" id="GO:0004449">
    <property type="term" value="F:isocitrate dehydrogenase (NAD+) activity"/>
    <property type="evidence" value="ECO:0007669"/>
    <property type="project" value="TreeGrafter"/>
</dbReference>
<dbReference type="GO" id="GO:0004450">
    <property type="term" value="F:isocitrate dehydrogenase (NADP+) activity"/>
    <property type="evidence" value="ECO:0007669"/>
    <property type="project" value="UniProtKB-EC"/>
</dbReference>
<dbReference type="GO" id="GO:0000287">
    <property type="term" value="F:magnesium ion binding"/>
    <property type="evidence" value="ECO:0007669"/>
    <property type="project" value="InterPro"/>
</dbReference>
<dbReference type="GO" id="GO:0051287">
    <property type="term" value="F:NAD binding"/>
    <property type="evidence" value="ECO:0007669"/>
    <property type="project" value="InterPro"/>
</dbReference>
<dbReference type="GO" id="GO:0006097">
    <property type="term" value="P:glyoxylate cycle"/>
    <property type="evidence" value="ECO:0007669"/>
    <property type="project" value="UniProtKB-KW"/>
</dbReference>
<dbReference type="GO" id="GO:0006102">
    <property type="term" value="P:isocitrate metabolic process"/>
    <property type="evidence" value="ECO:0007669"/>
    <property type="project" value="TreeGrafter"/>
</dbReference>
<dbReference type="GO" id="GO:0006099">
    <property type="term" value="P:tricarboxylic acid cycle"/>
    <property type="evidence" value="ECO:0007669"/>
    <property type="project" value="UniProtKB-KW"/>
</dbReference>
<dbReference type="Gene3D" id="3.30.70.1570">
    <property type="match status" value="1"/>
</dbReference>
<dbReference type="Gene3D" id="3.40.718.10">
    <property type="entry name" value="Isopropylmalate Dehydrogenase"/>
    <property type="match status" value="1"/>
</dbReference>
<dbReference type="InterPro" id="IPR019818">
    <property type="entry name" value="IsoCit/isopropylmalate_DH_CS"/>
</dbReference>
<dbReference type="InterPro" id="IPR040978">
    <property type="entry name" value="Isocitrate_DH_TT1725_C"/>
</dbReference>
<dbReference type="InterPro" id="IPR046997">
    <property type="entry name" value="Isocitrate_DH_TT1725_C_sf"/>
</dbReference>
<dbReference type="InterPro" id="IPR024084">
    <property type="entry name" value="IsoPropMal-DH-like_dom"/>
</dbReference>
<dbReference type="NCBIfam" id="NF006673">
    <property type="entry name" value="PRK09222.1"/>
    <property type="match status" value="1"/>
</dbReference>
<dbReference type="PANTHER" id="PTHR11835">
    <property type="entry name" value="DECARBOXYLATING DEHYDROGENASES-ISOCITRATE, ISOPROPYLMALATE, TARTRATE"/>
    <property type="match status" value="1"/>
</dbReference>
<dbReference type="PANTHER" id="PTHR11835:SF43">
    <property type="entry name" value="ISOPROPYLMALATE DEHYDROGENASE-LIKE DOMAIN-CONTAINING PROTEIN"/>
    <property type="match status" value="1"/>
</dbReference>
<dbReference type="Pfam" id="PF00180">
    <property type="entry name" value="Iso_dh"/>
    <property type="match status" value="1"/>
</dbReference>
<dbReference type="Pfam" id="PF18324">
    <property type="entry name" value="Isocitrate_DH_C_bact"/>
    <property type="match status" value="1"/>
</dbReference>
<dbReference type="SMART" id="SM01329">
    <property type="entry name" value="Iso_dh"/>
    <property type="match status" value="1"/>
</dbReference>
<dbReference type="SUPFAM" id="SSF53659">
    <property type="entry name" value="Isocitrate/Isopropylmalate dehydrogenase-like"/>
    <property type="match status" value="1"/>
</dbReference>
<dbReference type="PROSITE" id="PS00470">
    <property type="entry name" value="IDH_IMDH"/>
    <property type="match status" value="1"/>
</dbReference>